<sequence>MLKEKVEKLAEKVFEENNSLFLISLDINSANHIKIVLDGDEGVSVNDCIMVSRGIEHNLDREEEDFSLEVTSAGVSEPLSMPRQYKKNIGRRLQVKTENDKFEADLLSADQNEIKLSWKAREPKPVGKGKVTVQKEVVLPYTDIVEAKVKITF</sequence>
<name>RIMP_CHRFK</name>
<organism>
    <name type="scientific">Christiangramia forsetii (strain DSM 17595 / CGMCC 1.15422 / KT0803)</name>
    <name type="common">Gramella forsetii</name>
    <dbReference type="NCBI Taxonomy" id="411154"/>
    <lineage>
        <taxon>Bacteria</taxon>
        <taxon>Pseudomonadati</taxon>
        <taxon>Bacteroidota</taxon>
        <taxon>Flavobacteriia</taxon>
        <taxon>Flavobacteriales</taxon>
        <taxon>Flavobacteriaceae</taxon>
        <taxon>Christiangramia</taxon>
    </lineage>
</organism>
<keyword id="KW-0963">Cytoplasm</keyword>
<keyword id="KW-0690">Ribosome biogenesis</keyword>
<accession>A0LXP9</accession>
<proteinExistence type="inferred from homology"/>
<protein>
    <recommendedName>
        <fullName evidence="1">Ribosome maturation factor RimP</fullName>
    </recommendedName>
</protein>
<gene>
    <name evidence="1" type="primary">rimP</name>
    <name type="ordered locus">GFO_0156</name>
</gene>
<dbReference type="EMBL" id="CU207366">
    <property type="protein sequence ID" value="CAL65144.1"/>
    <property type="molecule type" value="Genomic_DNA"/>
</dbReference>
<dbReference type="RefSeq" id="WP_011708082.1">
    <property type="nucleotide sequence ID" value="NC_008571.1"/>
</dbReference>
<dbReference type="SMR" id="A0LXP9"/>
<dbReference type="STRING" id="411154.GFO_0156"/>
<dbReference type="KEGG" id="gfo:GFO_0156"/>
<dbReference type="eggNOG" id="COG0779">
    <property type="taxonomic scope" value="Bacteria"/>
</dbReference>
<dbReference type="HOGENOM" id="CLU_070525_3_1_10"/>
<dbReference type="OrthoDB" id="9789702at2"/>
<dbReference type="Proteomes" id="UP000000755">
    <property type="component" value="Chromosome"/>
</dbReference>
<dbReference type="GO" id="GO:0005737">
    <property type="term" value="C:cytoplasm"/>
    <property type="evidence" value="ECO:0007669"/>
    <property type="project" value="UniProtKB-SubCell"/>
</dbReference>
<dbReference type="GO" id="GO:0042274">
    <property type="term" value="P:ribosomal small subunit biogenesis"/>
    <property type="evidence" value="ECO:0007669"/>
    <property type="project" value="UniProtKB-UniRule"/>
</dbReference>
<dbReference type="Gene3D" id="3.30.300.70">
    <property type="entry name" value="RimP-like superfamily, N-terminal"/>
    <property type="match status" value="1"/>
</dbReference>
<dbReference type="HAMAP" id="MF_01077">
    <property type="entry name" value="RimP"/>
    <property type="match status" value="1"/>
</dbReference>
<dbReference type="InterPro" id="IPR003728">
    <property type="entry name" value="Ribosome_maturation_RimP"/>
</dbReference>
<dbReference type="InterPro" id="IPR028989">
    <property type="entry name" value="RimP_N"/>
</dbReference>
<dbReference type="InterPro" id="IPR035956">
    <property type="entry name" value="RimP_N_sf"/>
</dbReference>
<dbReference type="NCBIfam" id="NF002531">
    <property type="entry name" value="PRK02001.1"/>
    <property type="match status" value="1"/>
</dbReference>
<dbReference type="PANTHER" id="PTHR33867">
    <property type="entry name" value="RIBOSOME MATURATION FACTOR RIMP"/>
    <property type="match status" value="1"/>
</dbReference>
<dbReference type="PANTHER" id="PTHR33867:SF1">
    <property type="entry name" value="RIBOSOME MATURATION FACTOR RIMP"/>
    <property type="match status" value="1"/>
</dbReference>
<dbReference type="Pfam" id="PF02576">
    <property type="entry name" value="RimP_N"/>
    <property type="match status" value="1"/>
</dbReference>
<dbReference type="SUPFAM" id="SSF75420">
    <property type="entry name" value="YhbC-like, N-terminal domain"/>
    <property type="match status" value="1"/>
</dbReference>
<reference key="1">
    <citation type="journal article" date="2006" name="Environ. Microbiol.">
        <title>Whole genome analysis of the marine Bacteroidetes'Gramella forsetii' reveals adaptations to degradation of polymeric organic matter.</title>
        <authorList>
            <person name="Bauer M."/>
            <person name="Kube M."/>
            <person name="Teeling H."/>
            <person name="Richter M."/>
            <person name="Lombardot T."/>
            <person name="Allers E."/>
            <person name="Wuerdemann C.A."/>
            <person name="Quast C."/>
            <person name="Kuhl H."/>
            <person name="Knaust F."/>
            <person name="Woebken D."/>
            <person name="Bischof K."/>
            <person name="Mussmann M."/>
            <person name="Choudhuri J.V."/>
            <person name="Meyer F."/>
            <person name="Reinhardt R."/>
            <person name="Amann R.I."/>
            <person name="Gloeckner F.O."/>
        </authorList>
    </citation>
    <scope>NUCLEOTIDE SEQUENCE [LARGE SCALE GENOMIC DNA]</scope>
    <source>
        <strain>DSM 17595 / CGMCC 1.15422 / KT0803</strain>
    </source>
</reference>
<comment type="function">
    <text evidence="1">Required for maturation of 30S ribosomal subunits.</text>
</comment>
<comment type="subcellular location">
    <subcellularLocation>
        <location evidence="1">Cytoplasm</location>
    </subcellularLocation>
</comment>
<comment type="similarity">
    <text evidence="1">Belongs to the RimP family.</text>
</comment>
<feature type="chain" id="PRO_1000064714" description="Ribosome maturation factor RimP">
    <location>
        <begin position="1"/>
        <end position="153"/>
    </location>
</feature>
<evidence type="ECO:0000255" key="1">
    <source>
        <dbReference type="HAMAP-Rule" id="MF_01077"/>
    </source>
</evidence>